<accession>Q9WYJ1</accession>
<accession>G4FHR8</accession>
<feature type="chain" id="PRO_0000458663" description="L-threonine ammonia-lyase">
    <location>
        <begin position="1"/>
        <end position="401"/>
    </location>
</feature>
<feature type="domain" description="ACT" evidence="2">
    <location>
        <begin position="326"/>
        <end position="401"/>
    </location>
</feature>
<feature type="binding site" evidence="1">
    <location>
        <position position="78"/>
    </location>
    <ligand>
        <name>pyridoxal 5'-phosphate</name>
        <dbReference type="ChEBI" id="CHEBI:597326"/>
    </ligand>
</feature>
<feature type="binding site" evidence="1">
    <location>
        <begin position="178"/>
        <end position="181"/>
    </location>
    <ligand>
        <name>pyridoxal 5'-phosphate</name>
        <dbReference type="ChEBI" id="CHEBI:597326"/>
    </ligand>
</feature>
<feature type="binding site" evidence="1">
    <location>
        <position position="301"/>
    </location>
    <ligand>
        <name>pyridoxal 5'-phosphate</name>
        <dbReference type="ChEBI" id="CHEBI:597326"/>
    </ligand>
</feature>
<feature type="modified residue" description="N6-(pyridoxal phosphate)lysine" evidence="1">
    <location>
        <position position="51"/>
    </location>
</feature>
<gene>
    <name evidence="7" type="ordered locus">TM_0356</name>
</gene>
<organism>
    <name type="scientific">Thermotoga maritima (strain ATCC 43589 / DSM 3109 / JCM 10099 / NBRC 100826 / MSB8)</name>
    <dbReference type="NCBI Taxonomy" id="243274"/>
    <lineage>
        <taxon>Bacteria</taxon>
        <taxon>Thermotogati</taxon>
        <taxon>Thermotogota</taxon>
        <taxon>Thermotogae</taxon>
        <taxon>Thermotogales</taxon>
        <taxon>Thermotogaceae</taxon>
        <taxon>Thermotoga</taxon>
    </lineage>
</organism>
<proteinExistence type="evidence at protein level"/>
<keyword id="KW-0028">Amino-acid biosynthesis</keyword>
<keyword id="KW-0100">Branched-chain amino acid biosynthesis</keyword>
<keyword id="KW-0412">Isoleucine biosynthesis</keyword>
<keyword id="KW-0456">Lyase</keyword>
<keyword id="KW-0663">Pyridoxal phosphate</keyword>
<keyword id="KW-1185">Reference proteome</keyword>
<name>TSAL_THEMA</name>
<reference key="1">
    <citation type="journal article" date="1999" name="Nature">
        <title>Evidence for lateral gene transfer between Archaea and Bacteria from genome sequence of Thermotoga maritima.</title>
        <authorList>
            <person name="Nelson K.E."/>
            <person name="Clayton R.A."/>
            <person name="Gill S.R."/>
            <person name="Gwinn M.L."/>
            <person name="Dodson R.J."/>
            <person name="Haft D.H."/>
            <person name="Hickey E.K."/>
            <person name="Peterson J.D."/>
            <person name="Nelson W.C."/>
            <person name="Ketchum K.A."/>
            <person name="McDonald L.A."/>
            <person name="Utterback T.R."/>
            <person name="Malek J.A."/>
            <person name="Linher K.D."/>
            <person name="Garrett M.M."/>
            <person name="Stewart A.M."/>
            <person name="Cotton M.D."/>
            <person name="Pratt M.S."/>
            <person name="Phillips C.A."/>
            <person name="Richardson D.L."/>
            <person name="Heidelberg J.F."/>
            <person name="Sutton G.G."/>
            <person name="Fleischmann R.D."/>
            <person name="Eisen J.A."/>
            <person name="White O."/>
            <person name="Salzberg S.L."/>
            <person name="Smith H.O."/>
            <person name="Venter J.C."/>
            <person name="Fraser C.M."/>
        </authorList>
    </citation>
    <scope>NUCLEOTIDE SEQUENCE [LARGE SCALE GENOMIC DNA]</scope>
    <source>
        <strain>ATCC 43589 / DSM 3109 / JCM 10099 / NBRC 100826 / MSB8</strain>
    </source>
</reference>
<reference key="2">
    <citation type="journal article" date="2021" name="Amino Acids">
        <title>Identification and biochemical characterization of threonine dehydratase from the hyperthermophile Thermotoga maritima.</title>
        <authorList>
            <person name="Miyamoto T."/>
            <person name="Katane M."/>
            <person name="Saitoh Y."/>
            <person name="Sekine M."/>
            <person name="Sakai-Kato K."/>
            <person name="Homma H."/>
        </authorList>
    </citation>
    <scope>FUNCTION</scope>
    <scope>CATALYTIC ACTIVITY</scope>
    <scope>COFACTOR</scope>
    <scope>ACTIVITY REGULATION</scope>
    <scope>BIOPHYSICOCHEMICAL PROPERTIES</scope>
    <scope>PATHWAY</scope>
    <scope>SUBUNIT</scope>
    <source>
        <strain>ATCC 43589 / DSM 3109 / JCM 10099 / NBRC 100826 / MSB8</strain>
    </source>
</reference>
<evidence type="ECO:0000250" key="1">
    <source>
        <dbReference type="UniProtKB" id="P04968"/>
    </source>
</evidence>
<evidence type="ECO:0000255" key="2">
    <source>
        <dbReference type="PROSITE-ProRule" id="PRU01007"/>
    </source>
</evidence>
<evidence type="ECO:0000269" key="3">
    <source>
    </source>
</evidence>
<evidence type="ECO:0000303" key="4">
    <source>
    </source>
</evidence>
<evidence type="ECO:0000305" key="5"/>
<evidence type="ECO:0000305" key="6">
    <source>
    </source>
</evidence>
<evidence type="ECO:0000312" key="7">
    <source>
        <dbReference type="EMBL" id="AAD35443.1"/>
    </source>
</evidence>
<sequence length="401" mass="43110">MITLEDIKEAQRTLKNVVHRTALAYSSVLSEVTGGEIYLKMENLQKTGSFKIRGAYNKIAHLSEEERKRGVVAASAGNHAQGVALAAQIFGIPATIVMPRYAPLSKITKTRNLGAQVILEGNIFDEAYEAALRIQEKTGAVFVHPFNDPHVIAGQGTIGLEIMEDLPDVEVVVVPVGGGGLISGVSVAIKSMNPEVKVIGVQTENMPSMIASLRRGRAERVEGKPTLADGIAVKKPGDLTFELVKKYVDEMVAVNEEEIADAILFLLEQAKVVAEGAGAVGVAAVLNKLDVKGKKVAIVISGGNIDVNMIDRIINKGLVKSGRKVFIETFVMDRPGALKELLGIVAELGANVLSVFHNRSAKEVPIGFAKIELELETVDEKHVEEIERVLIAKGYEVRIVG</sequence>
<comment type="function">
    <text evidence="3 6">Catalyzes the conversion of L-threonine to 2-oxobutanoate and ammonia (PubMed:33938999). Can also use L-serine, but the catalytic efficiency toward L-threonine is about sixfold higher than that toward L-serine (PubMed:33938999). Also shows weak activity toward L-allo-threonine, but cannot use the corresponding D-amino acids (PubMed:33938999). Does not exhibit racemase activity toward various amino acids, including serine (PubMed:33938999). Physiologically, is likely involved in the threonine-dependent pathway of isoleucine biosynthesis (Probable).</text>
</comment>
<comment type="catalytic activity">
    <reaction evidence="3">
        <text>L-threonine = 2-oxobutanoate + NH4(+)</text>
        <dbReference type="Rhea" id="RHEA:22108"/>
        <dbReference type="ChEBI" id="CHEBI:16763"/>
        <dbReference type="ChEBI" id="CHEBI:28938"/>
        <dbReference type="ChEBI" id="CHEBI:57926"/>
        <dbReference type="EC" id="4.3.1.19"/>
    </reaction>
    <physiologicalReaction direction="left-to-right" evidence="6">
        <dbReference type="Rhea" id="RHEA:22109"/>
    </physiologicalReaction>
</comment>
<comment type="catalytic activity">
    <reaction evidence="3">
        <text>L-serine = pyruvate + NH4(+)</text>
        <dbReference type="Rhea" id="RHEA:19169"/>
        <dbReference type="ChEBI" id="CHEBI:15361"/>
        <dbReference type="ChEBI" id="CHEBI:28938"/>
        <dbReference type="ChEBI" id="CHEBI:33384"/>
        <dbReference type="EC" id="4.3.1.17"/>
    </reaction>
</comment>
<comment type="cofactor">
    <cofactor evidence="3">
        <name>pyridoxal 5'-phosphate</name>
        <dbReference type="ChEBI" id="CHEBI:597326"/>
    </cofactor>
</comment>
<comment type="activity regulation">
    <text evidence="3">Activity is insensitive to allosteric regulators L-valine and L-isoleucine at low concentrations, while these L-amino acids are inhibitors at high concentrations (PubMed:33938999). Is insensitive to ammonium chloride and AMP (PubMed:33938999). Inhibited in the presence of aminoxyacetic acid (AOAA), an inhibitor of pyridoxal phosphate-dependent enzymes (PubMed:33938999).</text>
</comment>
<comment type="biophysicochemical properties">
    <kinetics>
        <Vmax evidence="3">37.06 umol/sec/mg enzyme with L-threonine as substrate</Vmax>
        <Vmax evidence="3">25.79 umol/sec/mg enzyme with L-serine as substrate</Vmax>
        <Vmax evidence="3">1.24 umol/sec/mg enzyme with L-allo-threonine as substrate</Vmax>
        <text evidence="3">kcat is 1654 sec(-1) with L-threonine as substrate. kcat is 1151 sec(-1) with L-serine as substrate. kcat is 55 sec(-1) with L-allo-threonine as substrate.</text>
    </kinetics>
    <phDependence>
        <text evidence="3">Optimum pH is 9.0 with L-threonine as substrate.</text>
    </phDependence>
    <temperatureDependence>
        <text evidence="3">Optimum temperature is 90 degrees Celsius with L-threonine as substrate (PubMed:33938999). Activity is not detected at 50 or 60 degrees Celsius (PubMed:33938999). It increases from 70 to 90 degrees Celsius, peaks at 90 degrees Celsius and decreases from 90 to 95 degrees Celsius (PubMed:33938999).</text>
    </temperatureDependence>
</comment>
<comment type="pathway">
    <text evidence="6">Amino-acid biosynthesis; L-isoleucine biosynthesis; 2-oxobutanoate from L-threonine: step 1/1.</text>
</comment>
<comment type="subunit">
    <text evidence="3">Homotetramer.</text>
</comment>
<comment type="similarity">
    <text evidence="5">Belongs to the serine/threonine dehydratase family.</text>
</comment>
<dbReference type="EC" id="4.3.1.19" evidence="3"/>
<dbReference type="EC" id="4.3.1.17" evidence="3"/>
<dbReference type="EMBL" id="AE000512">
    <property type="protein sequence ID" value="AAD35443.1"/>
    <property type="molecule type" value="Genomic_DNA"/>
</dbReference>
<dbReference type="PIR" id="D72386">
    <property type="entry name" value="D72386"/>
</dbReference>
<dbReference type="RefSeq" id="NP_228167.1">
    <property type="nucleotide sequence ID" value="NC_000853.1"/>
</dbReference>
<dbReference type="RefSeq" id="WP_004083156.1">
    <property type="nucleotide sequence ID" value="NC_000853.1"/>
</dbReference>
<dbReference type="SMR" id="Q9WYJ1"/>
<dbReference type="FunCoup" id="Q9WYJ1">
    <property type="interactions" value="323"/>
</dbReference>
<dbReference type="PaxDb" id="243274-THEMA_02935"/>
<dbReference type="EnsemblBacteria" id="AAD35443">
    <property type="protein sequence ID" value="AAD35443"/>
    <property type="gene ID" value="TM_0356"/>
</dbReference>
<dbReference type="KEGG" id="tma:TM0356"/>
<dbReference type="KEGG" id="tmi:THEMA_02935"/>
<dbReference type="KEGG" id="tmm:Tmari_0354"/>
<dbReference type="KEGG" id="tmw:THMA_0364"/>
<dbReference type="PATRIC" id="fig|243274.17.peg.353"/>
<dbReference type="InParanoid" id="Q9WYJ1"/>
<dbReference type="OrthoDB" id="9811476at2"/>
<dbReference type="UniPathway" id="UPA00047">
    <property type="reaction ID" value="UER00054"/>
</dbReference>
<dbReference type="Proteomes" id="UP000008183">
    <property type="component" value="Chromosome"/>
</dbReference>
<dbReference type="GO" id="GO:0003941">
    <property type="term" value="F:L-serine ammonia-lyase activity"/>
    <property type="evidence" value="ECO:0000318"/>
    <property type="project" value="GO_Central"/>
</dbReference>
<dbReference type="GO" id="GO:0030170">
    <property type="term" value="F:pyridoxal phosphate binding"/>
    <property type="evidence" value="ECO:0007669"/>
    <property type="project" value="InterPro"/>
</dbReference>
<dbReference type="GO" id="GO:0004794">
    <property type="term" value="F:threonine deaminase activity"/>
    <property type="evidence" value="ECO:0007669"/>
    <property type="project" value="UniProtKB-EC"/>
</dbReference>
<dbReference type="GO" id="GO:0009097">
    <property type="term" value="P:isoleucine biosynthetic process"/>
    <property type="evidence" value="ECO:0007669"/>
    <property type="project" value="UniProtKB-UniPathway"/>
</dbReference>
<dbReference type="GO" id="GO:0006565">
    <property type="term" value="P:L-serine catabolic process"/>
    <property type="evidence" value="ECO:0000318"/>
    <property type="project" value="GO_Central"/>
</dbReference>
<dbReference type="GO" id="GO:0006567">
    <property type="term" value="P:threonine catabolic process"/>
    <property type="evidence" value="ECO:0007669"/>
    <property type="project" value="InterPro"/>
</dbReference>
<dbReference type="CDD" id="cd04886">
    <property type="entry name" value="ACT_ThrD-II-like"/>
    <property type="match status" value="1"/>
</dbReference>
<dbReference type="CDD" id="cd01562">
    <property type="entry name" value="Thr-dehyd"/>
    <property type="match status" value="1"/>
</dbReference>
<dbReference type="FunFam" id="3.40.50.1100:FF:000007">
    <property type="entry name" value="L-threonine dehydratase catabolic TdcB"/>
    <property type="match status" value="1"/>
</dbReference>
<dbReference type="Gene3D" id="3.40.50.1100">
    <property type="match status" value="2"/>
</dbReference>
<dbReference type="InterPro" id="IPR045865">
    <property type="entry name" value="ACT-like_dom_sf"/>
</dbReference>
<dbReference type="InterPro" id="IPR002912">
    <property type="entry name" value="ACT_dom"/>
</dbReference>
<dbReference type="InterPro" id="IPR044561">
    <property type="entry name" value="ACT_ThrD-II-like"/>
</dbReference>
<dbReference type="InterPro" id="IPR050147">
    <property type="entry name" value="Ser/Thr_Dehydratase"/>
</dbReference>
<dbReference type="InterPro" id="IPR000634">
    <property type="entry name" value="Ser/Thr_deHydtase_PyrdxlP-BS"/>
</dbReference>
<dbReference type="InterPro" id="IPR005789">
    <property type="entry name" value="Thr_deHydtase_catblc"/>
</dbReference>
<dbReference type="InterPro" id="IPR001926">
    <property type="entry name" value="TrpB-like_PALP"/>
</dbReference>
<dbReference type="InterPro" id="IPR036052">
    <property type="entry name" value="TrpB-like_PALP_sf"/>
</dbReference>
<dbReference type="NCBIfam" id="TIGR01127">
    <property type="entry name" value="ilvA_1Cterm"/>
    <property type="match status" value="1"/>
</dbReference>
<dbReference type="PANTHER" id="PTHR48078:SF6">
    <property type="entry name" value="L-THREONINE DEHYDRATASE CATABOLIC TDCB"/>
    <property type="match status" value="1"/>
</dbReference>
<dbReference type="PANTHER" id="PTHR48078">
    <property type="entry name" value="THREONINE DEHYDRATASE, MITOCHONDRIAL-RELATED"/>
    <property type="match status" value="1"/>
</dbReference>
<dbReference type="Pfam" id="PF01842">
    <property type="entry name" value="ACT"/>
    <property type="match status" value="1"/>
</dbReference>
<dbReference type="Pfam" id="PF00291">
    <property type="entry name" value="PALP"/>
    <property type="match status" value="1"/>
</dbReference>
<dbReference type="SUPFAM" id="SSF55021">
    <property type="entry name" value="ACT-like"/>
    <property type="match status" value="1"/>
</dbReference>
<dbReference type="SUPFAM" id="SSF53686">
    <property type="entry name" value="Tryptophan synthase beta subunit-like PLP-dependent enzymes"/>
    <property type="match status" value="1"/>
</dbReference>
<dbReference type="PROSITE" id="PS51671">
    <property type="entry name" value="ACT"/>
    <property type="match status" value="1"/>
</dbReference>
<dbReference type="PROSITE" id="PS00165">
    <property type="entry name" value="DEHYDRATASE_SER_THR"/>
    <property type="match status" value="1"/>
</dbReference>
<protein>
    <recommendedName>
        <fullName evidence="4">L-threonine ammonia-lyase</fullName>
        <ecNumber evidence="3">4.3.1.19</ecNumber>
    </recommendedName>
    <alternativeName>
        <fullName evidence="5">L-serine ammonia-lyase</fullName>
        <ecNumber evidence="3">4.3.1.17</ecNumber>
    </alternativeName>
    <alternativeName>
        <fullName evidence="4">Threonine dehydratase</fullName>
    </alternativeName>
</protein>